<evidence type="ECO:0000255" key="1">
    <source>
        <dbReference type="HAMAP-Rule" id="MF_01142"/>
    </source>
</evidence>
<organism>
    <name type="scientific">Staphylococcus aureus (strain N315)</name>
    <dbReference type="NCBI Taxonomy" id="158879"/>
    <lineage>
        <taxon>Bacteria</taxon>
        <taxon>Bacillati</taxon>
        <taxon>Bacillota</taxon>
        <taxon>Bacilli</taxon>
        <taxon>Bacillales</taxon>
        <taxon>Staphylococcaceae</taxon>
        <taxon>Staphylococcus</taxon>
    </lineage>
</organism>
<keyword id="KW-1003">Cell membrane</keyword>
<keyword id="KW-0204">Cytolysis</keyword>
<keyword id="KW-0472">Membrane</keyword>
<keyword id="KW-0812">Transmembrane</keyword>
<keyword id="KW-1133">Transmembrane helix</keyword>
<gene>
    <name evidence="1" type="primary">lrgB</name>
    <name type="ordered locus">SA0253</name>
</gene>
<proteinExistence type="inferred from homology"/>
<reference key="1">
    <citation type="journal article" date="2001" name="Lancet">
        <title>Whole genome sequencing of meticillin-resistant Staphylococcus aureus.</title>
        <authorList>
            <person name="Kuroda M."/>
            <person name="Ohta T."/>
            <person name="Uchiyama I."/>
            <person name="Baba T."/>
            <person name="Yuzawa H."/>
            <person name="Kobayashi I."/>
            <person name="Cui L."/>
            <person name="Oguchi A."/>
            <person name="Aoki K."/>
            <person name="Nagai Y."/>
            <person name="Lian J.-Q."/>
            <person name="Ito T."/>
            <person name="Kanamori M."/>
            <person name="Matsumaru H."/>
            <person name="Maruyama A."/>
            <person name="Murakami H."/>
            <person name="Hosoyama A."/>
            <person name="Mizutani-Ui Y."/>
            <person name="Takahashi N.K."/>
            <person name="Sawano T."/>
            <person name="Inoue R."/>
            <person name="Kaito C."/>
            <person name="Sekimizu K."/>
            <person name="Hirakawa H."/>
            <person name="Kuhara S."/>
            <person name="Goto S."/>
            <person name="Yabuzaki J."/>
            <person name="Kanehisa M."/>
            <person name="Yamashita A."/>
            <person name="Oshima K."/>
            <person name="Furuya K."/>
            <person name="Yoshino C."/>
            <person name="Shiba T."/>
            <person name="Hattori M."/>
            <person name="Ogasawara N."/>
            <person name="Hayashi H."/>
            <person name="Hiramatsu K."/>
        </authorList>
    </citation>
    <scope>NUCLEOTIDE SEQUENCE [LARGE SCALE GENOMIC DNA]</scope>
    <source>
        <strain>N315</strain>
    </source>
</reference>
<accession>P60642</accession>
<accession>P72359</accession>
<dbReference type="EMBL" id="BA000018">
    <property type="protein sequence ID" value="BAB41477.1"/>
    <property type="molecule type" value="Genomic_DNA"/>
</dbReference>
<dbReference type="PIR" id="B89790">
    <property type="entry name" value="B89790"/>
</dbReference>
<dbReference type="RefSeq" id="WP_000607067.1">
    <property type="nucleotide sequence ID" value="NC_002745.2"/>
</dbReference>
<dbReference type="EnsemblBacteria" id="BAB41477">
    <property type="protein sequence ID" value="BAB41477"/>
    <property type="gene ID" value="BAB41477"/>
</dbReference>
<dbReference type="KEGG" id="sau:SA0253"/>
<dbReference type="HOGENOM" id="CLU_082099_1_0_9"/>
<dbReference type="GO" id="GO:0005886">
    <property type="term" value="C:plasma membrane"/>
    <property type="evidence" value="ECO:0007669"/>
    <property type="project" value="UniProtKB-SubCell"/>
</dbReference>
<dbReference type="GO" id="GO:0019835">
    <property type="term" value="P:cytolysis"/>
    <property type="evidence" value="ECO:0007669"/>
    <property type="project" value="UniProtKB-UniRule"/>
</dbReference>
<dbReference type="GO" id="GO:0031640">
    <property type="term" value="P:killing of cells of another organism"/>
    <property type="evidence" value="ECO:0007669"/>
    <property type="project" value="UniProtKB-KW"/>
</dbReference>
<dbReference type="GO" id="GO:0012501">
    <property type="term" value="P:programmed cell death"/>
    <property type="evidence" value="ECO:0007669"/>
    <property type="project" value="UniProtKB-UniRule"/>
</dbReference>
<dbReference type="HAMAP" id="MF_01142">
    <property type="entry name" value="LrgB"/>
    <property type="match status" value="1"/>
</dbReference>
<dbReference type="InterPro" id="IPR024891">
    <property type="entry name" value="Antiholin-like_LrgB"/>
</dbReference>
<dbReference type="InterPro" id="IPR007300">
    <property type="entry name" value="CidB/LrgB"/>
</dbReference>
<dbReference type="NCBIfam" id="NF003291">
    <property type="entry name" value="PRK04288.1"/>
    <property type="match status" value="1"/>
</dbReference>
<dbReference type="PANTHER" id="PTHR30249:SF0">
    <property type="entry name" value="PLASTIDAL GLYCOLATE_GLYCERATE TRANSLOCATOR 1, CHLOROPLASTIC"/>
    <property type="match status" value="1"/>
</dbReference>
<dbReference type="PANTHER" id="PTHR30249">
    <property type="entry name" value="PUTATIVE SEROTONIN TRANSPORTER"/>
    <property type="match status" value="1"/>
</dbReference>
<dbReference type="Pfam" id="PF04172">
    <property type="entry name" value="LrgB"/>
    <property type="match status" value="1"/>
</dbReference>
<comment type="function">
    <text evidence="1">Inhibits the expression or activity of extracellular murein hydrolases by interacting, possibly with LrgA, with the holin-like proteins CidA and/or CidB. The LrgAB and CidAB proteins may affect the proton motive force of the membrane. May be involved in programmed cell death (PCD), possibly triggering PCD in response to antibiotics and environmental stresses.</text>
</comment>
<comment type="subcellular location">
    <subcellularLocation>
        <location evidence="1">Cell membrane</location>
        <topology evidence="1">Multi-pass membrane protein</topology>
    </subcellularLocation>
</comment>
<comment type="similarity">
    <text evidence="1">Belongs to the CidB/LrgB family. LrgB subfamily.</text>
</comment>
<feature type="chain" id="PRO_0000217058" description="Antiholin-like protein LrgB">
    <location>
        <begin position="1"/>
        <end position="233"/>
    </location>
</feature>
<feature type="transmembrane region" description="Helical" evidence="1">
    <location>
        <begin position="5"/>
        <end position="27"/>
    </location>
</feature>
<feature type="transmembrane region" description="Helical" evidence="1">
    <location>
        <begin position="34"/>
        <end position="56"/>
    </location>
</feature>
<feature type="transmembrane region" description="Helical" evidence="1">
    <location>
        <begin position="67"/>
        <end position="84"/>
    </location>
</feature>
<feature type="transmembrane region" description="Helical" evidence="1">
    <location>
        <begin position="97"/>
        <end position="116"/>
    </location>
</feature>
<feature type="transmembrane region" description="Helical" evidence="1">
    <location>
        <begin position="126"/>
        <end position="148"/>
    </location>
</feature>
<feature type="transmembrane region" description="Helical" evidence="1">
    <location>
        <begin position="155"/>
        <end position="177"/>
    </location>
</feature>
<feature type="transmembrane region" description="Helical" evidence="1">
    <location>
        <begin position="210"/>
        <end position="232"/>
    </location>
</feature>
<name>LRGB_STAAN</name>
<sequence>MINHLALNTPYFGILLSVIPFFLATILFEKTNRFFLFAPLFVSMVFGVAFLYLTGIPYKTYKIGGDIIYFFLEPATICFAIPLYKKREVLVKHWHRIIGGIGIGTVVALLIILTFAKLAQFANDVILSMLPQAATTAIALPVSAGIGGIKELTSLAVILNGVIIYALGNKFLKLFRITNPIARGLALGTSGHTLGVAPAKELGPVEESMASIALVLVGVVVVAVVPVFVAIFF</sequence>
<protein>
    <recommendedName>
        <fullName evidence="1">Antiholin-like protein LrgB</fullName>
    </recommendedName>
</protein>